<reference key="1">
    <citation type="journal article" date="2005" name="Arch. Microbiol.">
        <title>The genome sequence of an anaerobic aromatic-degrading denitrifying bacterium, strain EbN1.</title>
        <authorList>
            <person name="Rabus R."/>
            <person name="Kube M."/>
            <person name="Heider J."/>
            <person name="Beck A."/>
            <person name="Heitmann K."/>
            <person name="Widdel F."/>
            <person name="Reinhardt R."/>
        </authorList>
    </citation>
    <scope>NUCLEOTIDE SEQUENCE [LARGE SCALE GENOMIC DNA]</scope>
    <source>
        <strain>DSM 19018 / LMG 30748 / EbN1</strain>
    </source>
</reference>
<keyword id="KW-0067">ATP-binding</keyword>
<keyword id="KW-0963">Cytoplasm</keyword>
<keyword id="KW-0227">DNA damage</keyword>
<keyword id="KW-0228">DNA excision</keyword>
<keyword id="KW-0234">DNA repair</keyword>
<keyword id="KW-0267">Excision nuclease</keyword>
<keyword id="KW-0547">Nucleotide-binding</keyword>
<keyword id="KW-1185">Reference proteome</keyword>
<keyword id="KW-0742">SOS response</keyword>
<sequence length="685" mass="77530">MTSSTDSVPVITFADSPFRLHQPFPPAGDQPAAIELLTEGIGDGLMYQTLLGVTGSGKTYTMANVIARCGRPALVLAPNKTLAAQLYAEFREFFPENAVEYFVSYYDYYQPEAYVPSRDLFIEKDSSINEHIEQMRLSATKSLMERRDVVIVATVSCIYGIGDPVDYHAMILHLREGERIAHRDLVQRLVAMQYTRSDIDFRRGTFRVRGDVIDVFPAENAELAVRIEMFDDEVEHLTLFDPLTGHLKQKLVRFTVYPSSHYVTPRATVLKAIEAIKDELRDRSAWFQTSGKLVEAQRIEQRTRFDLEMLNEMGFCKGIENYSRHLSGRGQGEPPPTLIDYLPSDALLFVDESHVSIPQVGGMYKGDRSRKENLVGYGFRLPSALDNRPLKFEEFERLMPQTIFVSATPSTYEAEHQGQVVEQVVRPTGLIDPAIDVRPATTQVDDLLSEAKRRIAVGERVLVTTLTKRMAEDLTDYLAENGIRVRYLHSDIDTVERVEIIRDLRLGKFDVLVGINLLREGLDIPEVSLVAILDADKEGFLRSERSLIQTIGRAARHINGRAILYADVVTRSMRAAIDETERRRVKQIAFNQANGIVPKTVSKRIKDIIDGVYGGDVERDGRSVAEPPPEYFSMNEKTVAKSIRKLEKEMQEHARNLEFEKAAAARDELFRLRQRTFGADQHGTP</sequence>
<comment type="function">
    <text evidence="1">The UvrABC repair system catalyzes the recognition and processing of DNA lesions. A damage recognition complex composed of 2 UvrA and 2 UvrB subunits scans DNA for abnormalities. Upon binding of the UvrA(2)B(2) complex to a putative damaged site, the DNA wraps around one UvrB monomer. DNA wrap is dependent on ATP binding by UvrB and probably causes local melting of the DNA helix, facilitating insertion of UvrB beta-hairpin between the DNA strands. Then UvrB probes one DNA strand for the presence of a lesion. If a lesion is found the UvrA subunits dissociate and the UvrB-DNA preincision complex is formed. This complex is subsequently bound by UvrC and the second UvrB is released. If no lesion is found, the DNA wraps around the other UvrB subunit that will check the other stand for damage.</text>
</comment>
<comment type="subunit">
    <text evidence="1">Forms a heterotetramer with UvrA during the search for lesions. Interacts with UvrC in an incision complex.</text>
</comment>
<comment type="subcellular location">
    <subcellularLocation>
        <location evidence="1">Cytoplasm</location>
    </subcellularLocation>
</comment>
<comment type="domain">
    <text evidence="1">The beta-hairpin motif is involved in DNA binding.</text>
</comment>
<comment type="similarity">
    <text evidence="1">Belongs to the UvrB family.</text>
</comment>
<dbReference type="EMBL" id="CR555306">
    <property type="protein sequence ID" value="CAI09217.1"/>
    <property type="molecule type" value="Genomic_DNA"/>
</dbReference>
<dbReference type="RefSeq" id="WP_011238894.1">
    <property type="nucleotide sequence ID" value="NC_006513.1"/>
</dbReference>
<dbReference type="SMR" id="Q5P0E7"/>
<dbReference type="STRING" id="76114.ebA5438"/>
<dbReference type="KEGG" id="eba:ebA5438"/>
<dbReference type="eggNOG" id="COG0556">
    <property type="taxonomic scope" value="Bacteria"/>
</dbReference>
<dbReference type="HOGENOM" id="CLU_009621_2_1_4"/>
<dbReference type="OrthoDB" id="9806651at2"/>
<dbReference type="Proteomes" id="UP000006552">
    <property type="component" value="Chromosome"/>
</dbReference>
<dbReference type="GO" id="GO:0005737">
    <property type="term" value="C:cytoplasm"/>
    <property type="evidence" value="ECO:0007669"/>
    <property type="project" value="UniProtKB-SubCell"/>
</dbReference>
<dbReference type="GO" id="GO:0009380">
    <property type="term" value="C:excinuclease repair complex"/>
    <property type="evidence" value="ECO:0007669"/>
    <property type="project" value="InterPro"/>
</dbReference>
<dbReference type="GO" id="GO:0005524">
    <property type="term" value="F:ATP binding"/>
    <property type="evidence" value="ECO:0007669"/>
    <property type="project" value="UniProtKB-UniRule"/>
</dbReference>
<dbReference type="GO" id="GO:0016887">
    <property type="term" value="F:ATP hydrolysis activity"/>
    <property type="evidence" value="ECO:0007669"/>
    <property type="project" value="InterPro"/>
</dbReference>
<dbReference type="GO" id="GO:0003677">
    <property type="term" value="F:DNA binding"/>
    <property type="evidence" value="ECO:0007669"/>
    <property type="project" value="UniProtKB-UniRule"/>
</dbReference>
<dbReference type="GO" id="GO:0009381">
    <property type="term" value="F:excinuclease ABC activity"/>
    <property type="evidence" value="ECO:0007669"/>
    <property type="project" value="UniProtKB-UniRule"/>
</dbReference>
<dbReference type="GO" id="GO:0006289">
    <property type="term" value="P:nucleotide-excision repair"/>
    <property type="evidence" value="ECO:0007669"/>
    <property type="project" value="UniProtKB-UniRule"/>
</dbReference>
<dbReference type="GO" id="GO:0009432">
    <property type="term" value="P:SOS response"/>
    <property type="evidence" value="ECO:0007669"/>
    <property type="project" value="UniProtKB-UniRule"/>
</dbReference>
<dbReference type="CDD" id="cd17916">
    <property type="entry name" value="DEXHc_UvrB"/>
    <property type="match status" value="1"/>
</dbReference>
<dbReference type="CDD" id="cd18790">
    <property type="entry name" value="SF2_C_UvrB"/>
    <property type="match status" value="1"/>
</dbReference>
<dbReference type="FunFam" id="3.40.50.300:FF:000477">
    <property type="entry name" value="UvrABC system protein B"/>
    <property type="match status" value="1"/>
</dbReference>
<dbReference type="Gene3D" id="6.10.140.240">
    <property type="match status" value="1"/>
</dbReference>
<dbReference type="Gene3D" id="3.40.50.300">
    <property type="entry name" value="P-loop containing nucleotide triphosphate hydrolases"/>
    <property type="match status" value="3"/>
</dbReference>
<dbReference type="Gene3D" id="4.10.860.10">
    <property type="entry name" value="UVR domain"/>
    <property type="match status" value="1"/>
</dbReference>
<dbReference type="HAMAP" id="MF_00204">
    <property type="entry name" value="UvrB"/>
    <property type="match status" value="1"/>
</dbReference>
<dbReference type="InterPro" id="IPR006935">
    <property type="entry name" value="Helicase/UvrB_N"/>
</dbReference>
<dbReference type="InterPro" id="IPR014001">
    <property type="entry name" value="Helicase_ATP-bd"/>
</dbReference>
<dbReference type="InterPro" id="IPR001650">
    <property type="entry name" value="Helicase_C-like"/>
</dbReference>
<dbReference type="InterPro" id="IPR027417">
    <property type="entry name" value="P-loop_NTPase"/>
</dbReference>
<dbReference type="InterPro" id="IPR001943">
    <property type="entry name" value="UVR_dom"/>
</dbReference>
<dbReference type="InterPro" id="IPR036876">
    <property type="entry name" value="UVR_dom_sf"/>
</dbReference>
<dbReference type="InterPro" id="IPR004807">
    <property type="entry name" value="UvrB"/>
</dbReference>
<dbReference type="InterPro" id="IPR041471">
    <property type="entry name" value="UvrB_inter"/>
</dbReference>
<dbReference type="InterPro" id="IPR024759">
    <property type="entry name" value="UvrB_YAD/RRR_dom"/>
</dbReference>
<dbReference type="NCBIfam" id="NF003673">
    <property type="entry name" value="PRK05298.1"/>
    <property type="match status" value="1"/>
</dbReference>
<dbReference type="NCBIfam" id="TIGR00631">
    <property type="entry name" value="uvrb"/>
    <property type="match status" value="1"/>
</dbReference>
<dbReference type="PANTHER" id="PTHR24029">
    <property type="entry name" value="UVRABC SYSTEM PROTEIN B"/>
    <property type="match status" value="1"/>
</dbReference>
<dbReference type="PANTHER" id="PTHR24029:SF0">
    <property type="entry name" value="UVRABC SYSTEM PROTEIN B"/>
    <property type="match status" value="1"/>
</dbReference>
<dbReference type="Pfam" id="PF00271">
    <property type="entry name" value="Helicase_C"/>
    <property type="match status" value="1"/>
</dbReference>
<dbReference type="Pfam" id="PF04851">
    <property type="entry name" value="ResIII"/>
    <property type="match status" value="1"/>
</dbReference>
<dbReference type="Pfam" id="PF02151">
    <property type="entry name" value="UVR"/>
    <property type="match status" value="1"/>
</dbReference>
<dbReference type="Pfam" id="PF12344">
    <property type="entry name" value="UvrB"/>
    <property type="match status" value="1"/>
</dbReference>
<dbReference type="Pfam" id="PF17757">
    <property type="entry name" value="UvrB_inter"/>
    <property type="match status" value="1"/>
</dbReference>
<dbReference type="SMART" id="SM00487">
    <property type="entry name" value="DEXDc"/>
    <property type="match status" value="1"/>
</dbReference>
<dbReference type="SMART" id="SM00490">
    <property type="entry name" value="HELICc"/>
    <property type="match status" value="1"/>
</dbReference>
<dbReference type="SUPFAM" id="SSF46600">
    <property type="entry name" value="C-terminal UvrC-binding domain of UvrB"/>
    <property type="match status" value="1"/>
</dbReference>
<dbReference type="SUPFAM" id="SSF52540">
    <property type="entry name" value="P-loop containing nucleoside triphosphate hydrolases"/>
    <property type="match status" value="2"/>
</dbReference>
<dbReference type="PROSITE" id="PS51192">
    <property type="entry name" value="HELICASE_ATP_BIND_1"/>
    <property type="match status" value="1"/>
</dbReference>
<dbReference type="PROSITE" id="PS51194">
    <property type="entry name" value="HELICASE_CTER"/>
    <property type="match status" value="1"/>
</dbReference>
<dbReference type="PROSITE" id="PS50151">
    <property type="entry name" value="UVR"/>
    <property type="match status" value="1"/>
</dbReference>
<proteinExistence type="inferred from homology"/>
<accession>Q5P0E7</accession>
<name>UVRB_AROAE</name>
<gene>
    <name evidence="1" type="primary">uvrB</name>
    <name type="ordered locus">AZOSEA30920</name>
    <name type="ORF">ebA5438</name>
</gene>
<feature type="chain" id="PRO_0000227278" description="UvrABC system protein B">
    <location>
        <begin position="1"/>
        <end position="685"/>
    </location>
</feature>
<feature type="domain" description="Helicase ATP-binding" evidence="1">
    <location>
        <begin position="39"/>
        <end position="420"/>
    </location>
</feature>
<feature type="domain" description="Helicase C-terminal" evidence="1">
    <location>
        <begin position="443"/>
        <end position="596"/>
    </location>
</feature>
<feature type="domain" description="UVR" evidence="1">
    <location>
        <begin position="640"/>
        <end position="675"/>
    </location>
</feature>
<feature type="short sequence motif" description="Beta-hairpin">
    <location>
        <begin position="105"/>
        <end position="128"/>
    </location>
</feature>
<feature type="binding site" evidence="1">
    <location>
        <begin position="52"/>
        <end position="59"/>
    </location>
    <ligand>
        <name>ATP</name>
        <dbReference type="ChEBI" id="CHEBI:30616"/>
    </ligand>
</feature>
<evidence type="ECO:0000255" key="1">
    <source>
        <dbReference type="HAMAP-Rule" id="MF_00204"/>
    </source>
</evidence>
<protein>
    <recommendedName>
        <fullName evidence="1">UvrABC system protein B</fullName>
        <shortName evidence="1">Protein UvrB</shortName>
    </recommendedName>
    <alternativeName>
        <fullName evidence="1">Excinuclease ABC subunit B</fullName>
    </alternativeName>
</protein>
<organism>
    <name type="scientific">Aromatoleum aromaticum (strain DSM 19018 / LMG 30748 / EbN1)</name>
    <name type="common">Azoarcus sp. (strain EbN1)</name>
    <dbReference type="NCBI Taxonomy" id="76114"/>
    <lineage>
        <taxon>Bacteria</taxon>
        <taxon>Pseudomonadati</taxon>
        <taxon>Pseudomonadota</taxon>
        <taxon>Betaproteobacteria</taxon>
        <taxon>Rhodocyclales</taxon>
        <taxon>Rhodocyclaceae</taxon>
        <taxon>Aromatoleum</taxon>
    </lineage>
</organism>